<proteinExistence type="inferred from homology"/>
<gene>
    <name evidence="1" type="primary">bpt</name>
    <name type="ordered locus">BamMC406_1477</name>
</gene>
<keyword id="KW-0012">Acyltransferase</keyword>
<keyword id="KW-0963">Cytoplasm</keyword>
<keyword id="KW-0808">Transferase</keyword>
<accession>B1YPI7</accession>
<organism>
    <name type="scientific">Burkholderia ambifaria (strain MC40-6)</name>
    <dbReference type="NCBI Taxonomy" id="398577"/>
    <lineage>
        <taxon>Bacteria</taxon>
        <taxon>Pseudomonadati</taxon>
        <taxon>Pseudomonadota</taxon>
        <taxon>Betaproteobacteria</taxon>
        <taxon>Burkholderiales</taxon>
        <taxon>Burkholderiaceae</taxon>
        <taxon>Burkholderia</taxon>
        <taxon>Burkholderia cepacia complex</taxon>
    </lineage>
</organism>
<name>BPT_BURA4</name>
<sequence length="276" mass="31164">MTHPTELPLSPLSALQFYATAPYPCSYLDGRIARSQVATPSHLINSDIYTELVKAGFRRSGVFTYRPYCDGCRACVPVRVPVGAFTPSRTQRRMWKRHRALVATVSPLHYDEEHYALYMRYQSARHAGGGMDRDSRDQYEQFLLQSRINSRLVEFRDLDAPGGEPGKLRMVSMIDILGDGLSSVYTFFEPDDQHTSYGTYNILWQIEQAKSLGLPYVYLGYWIRESPKMAYKANFHPLEGLLDGRWNVLDPDRVELPPVDAALARAPLPGGHSGSG</sequence>
<comment type="function">
    <text evidence="1">Functions in the N-end rule pathway of protein degradation where it conjugates Leu from its aminoacyl-tRNA to the N-termini of proteins containing an N-terminal aspartate or glutamate.</text>
</comment>
<comment type="catalytic activity">
    <reaction evidence="1">
        <text>N-terminal L-glutamyl-[protein] + L-leucyl-tRNA(Leu) = N-terminal L-leucyl-L-glutamyl-[protein] + tRNA(Leu) + H(+)</text>
        <dbReference type="Rhea" id="RHEA:50412"/>
        <dbReference type="Rhea" id="RHEA-COMP:9613"/>
        <dbReference type="Rhea" id="RHEA-COMP:9622"/>
        <dbReference type="Rhea" id="RHEA-COMP:12664"/>
        <dbReference type="Rhea" id="RHEA-COMP:12668"/>
        <dbReference type="ChEBI" id="CHEBI:15378"/>
        <dbReference type="ChEBI" id="CHEBI:64721"/>
        <dbReference type="ChEBI" id="CHEBI:78442"/>
        <dbReference type="ChEBI" id="CHEBI:78494"/>
        <dbReference type="ChEBI" id="CHEBI:133041"/>
        <dbReference type="EC" id="2.3.2.29"/>
    </reaction>
</comment>
<comment type="catalytic activity">
    <reaction evidence="1">
        <text>N-terminal L-aspartyl-[protein] + L-leucyl-tRNA(Leu) = N-terminal L-leucyl-L-aspartyl-[protein] + tRNA(Leu) + H(+)</text>
        <dbReference type="Rhea" id="RHEA:50420"/>
        <dbReference type="Rhea" id="RHEA-COMP:9613"/>
        <dbReference type="Rhea" id="RHEA-COMP:9622"/>
        <dbReference type="Rhea" id="RHEA-COMP:12669"/>
        <dbReference type="Rhea" id="RHEA-COMP:12674"/>
        <dbReference type="ChEBI" id="CHEBI:15378"/>
        <dbReference type="ChEBI" id="CHEBI:64720"/>
        <dbReference type="ChEBI" id="CHEBI:78442"/>
        <dbReference type="ChEBI" id="CHEBI:78494"/>
        <dbReference type="ChEBI" id="CHEBI:133042"/>
        <dbReference type="EC" id="2.3.2.29"/>
    </reaction>
</comment>
<comment type="subcellular location">
    <subcellularLocation>
        <location evidence="1">Cytoplasm</location>
    </subcellularLocation>
</comment>
<comment type="similarity">
    <text evidence="1">Belongs to the R-transferase family. Bpt subfamily.</text>
</comment>
<evidence type="ECO:0000255" key="1">
    <source>
        <dbReference type="HAMAP-Rule" id="MF_00689"/>
    </source>
</evidence>
<dbReference type="EC" id="2.3.2.29" evidence="1"/>
<dbReference type="EMBL" id="CP001025">
    <property type="protein sequence ID" value="ACB63964.1"/>
    <property type="molecule type" value="Genomic_DNA"/>
</dbReference>
<dbReference type="RefSeq" id="WP_012363788.1">
    <property type="nucleotide sequence ID" value="NC_010551.1"/>
</dbReference>
<dbReference type="SMR" id="B1YPI7"/>
<dbReference type="KEGG" id="bac:BamMC406_1477"/>
<dbReference type="HOGENOM" id="CLU_077607_0_0_4"/>
<dbReference type="OrthoDB" id="9782022at2"/>
<dbReference type="Proteomes" id="UP000001680">
    <property type="component" value="Chromosome 1"/>
</dbReference>
<dbReference type="GO" id="GO:0005737">
    <property type="term" value="C:cytoplasm"/>
    <property type="evidence" value="ECO:0007669"/>
    <property type="project" value="UniProtKB-SubCell"/>
</dbReference>
<dbReference type="GO" id="GO:0004057">
    <property type="term" value="F:arginyl-tRNA--protein transferase activity"/>
    <property type="evidence" value="ECO:0007669"/>
    <property type="project" value="InterPro"/>
</dbReference>
<dbReference type="GO" id="GO:0008914">
    <property type="term" value="F:leucyl-tRNA--protein transferase activity"/>
    <property type="evidence" value="ECO:0007669"/>
    <property type="project" value="UniProtKB-UniRule"/>
</dbReference>
<dbReference type="GO" id="GO:0071596">
    <property type="term" value="P:ubiquitin-dependent protein catabolic process via the N-end rule pathway"/>
    <property type="evidence" value="ECO:0007669"/>
    <property type="project" value="InterPro"/>
</dbReference>
<dbReference type="HAMAP" id="MF_00689">
    <property type="entry name" value="Bpt"/>
    <property type="match status" value="1"/>
</dbReference>
<dbReference type="InterPro" id="IPR016181">
    <property type="entry name" value="Acyl_CoA_acyltransferase"/>
</dbReference>
<dbReference type="InterPro" id="IPR017138">
    <property type="entry name" value="Asp_Glu_LeuTrfase"/>
</dbReference>
<dbReference type="InterPro" id="IPR030700">
    <property type="entry name" value="N-end_Aminoacyl_Trfase"/>
</dbReference>
<dbReference type="InterPro" id="IPR007472">
    <property type="entry name" value="N-end_Aminoacyl_Trfase_C"/>
</dbReference>
<dbReference type="InterPro" id="IPR007471">
    <property type="entry name" value="N-end_Aminoacyl_Trfase_N"/>
</dbReference>
<dbReference type="NCBIfam" id="NF002341">
    <property type="entry name" value="PRK01305.1-1"/>
    <property type="match status" value="1"/>
</dbReference>
<dbReference type="NCBIfam" id="NF002342">
    <property type="entry name" value="PRK01305.1-3"/>
    <property type="match status" value="1"/>
</dbReference>
<dbReference type="NCBIfam" id="NF002346">
    <property type="entry name" value="PRK01305.2-3"/>
    <property type="match status" value="1"/>
</dbReference>
<dbReference type="PANTHER" id="PTHR21367">
    <property type="entry name" value="ARGININE-TRNA-PROTEIN TRANSFERASE 1"/>
    <property type="match status" value="1"/>
</dbReference>
<dbReference type="PANTHER" id="PTHR21367:SF1">
    <property type="entry name" value="ARGINYL-TRNA--PROTEIN TRANSFERASE 1"/>
    <property type="match status" value="1"/>
</dbReference>
<dbReference type="Pfam" id="PF04377">
    <property type="entry name" value="ATE_C"/>
    <property type="match status" value="1"/>
</dbReference>
<dbReference type="Pfam" id="PF04376">
    <property type="entry name" value="ATE_N"/>
    <property type="match status" value="1"/>
</dbReference>
<dbReference type="PIRSF" id="PIRSF037208">
    <property type="entry name" value="ATE_pro_prd"/>
    <property type="match status" value="1"/>
</dbReference>
<dbReference type="SUPFAM" id="SSF55729">
    <property type="entry name" value="Acyl-CoA N-acyltransferases (Nat)"/>
    <property type="match status" value="1"/>
</dbReference>
<feature type="chain" id="PRO_1000131972" description="Aspartate/glutamate leucyltransferase">
    <location>
        <begin position="1"/>
        <end position="276"/>
    </location>
</feature>
<protein>
    <recommendedName>
        <fullName evidence="1">Aspartate/glutamate leucyltransferase</fullName>
        <ecNumber evidence="1">2.3.2.29</ecNumber>
    </recommendedName>
</protein>
<reference key="1">
    <citation type="submission" date="2008-04" db="EMBL/GenBank/DDBJ databases">
        <title>Complete sequence of chromosome 1 of Burkholderia ambifaria MC40-6.</title>
        <authorList>
            <person name="Copeland A."/>
            <person name="Lucas S."/>
            <person name="Lapidus A."/>
            <person name="Glavina del Rio T."/>
            <person name="Dalin E."/>
            <person name="Tice H."/>
            <person name="Pitluck S."/>
            <person name="Chain P."/>
            <person name="Malfatti S."/>
            <person name="Shin M."/>
            <person name="Vergez L."/>
            <person name="Lang D."/>
            <person name="Schmutz J."/>
            <person name="Larimer F."/>
            <person name="Land M."/>
            <person name="Hauser L."/>
            <person name="Kyrpides N."/>
            <person name="Lykidis A."/>
            <person name="Ramette A."/>
            <person name="Konstantinidis K."/>
            <person name="Tiedje J."/>
            <person name="Richardson P."/>
        </authorList>
    </citation>
    <scope>NUCLEOTIDE SEQUENCE [LARGE SCALE GENOMIC DNA]</scope>
    <source>
        <strain>MC40-6</strain>
    </source>
</reference>